<gene>
    <name evidence="1" type="primary">cpfC</name>
    <name type="ordered locus">SPH_1111</name>
</gene>
<name>CPFC_STRPI</name>
<evidence type="ECO:0000255" key="1">
    <source>
        <dbReference type="HAMAP-Rule" id="MF_00323"/>
    </source>
</evidence>
<sequence length="364" mass="42443">MKKAILMMTFGSPEEITFEGVADFFTNIRRGVRPQDHEIQTLYDNYVRIGGTPLQKITRQEVALVEARLGNEYSVYFANKFSSPFIPDVIGQMEADGIEQCICLILEPHYSFYSVMGYEKFLESKQIQFLVIKDWYQEEALLNYWVDEIAKILKEEVKQDSCKVIFSAHSVPIFALDFGDPYIDQIFENSKLVAEKLGLSSEQYTNTWQSESDIGIPWIKPDVLEYLREQTEHPDHYIFVPISFISEHIEVLFDNDVECYDLCQEFGVNYHRPPMPNTDSRLIDALVNTVRVNENQEFKEFLPEEETFDELVPSDETKNILAESEDLQMPEFVKKLIEKKGRENVKMPYLIKKMFEKAGKLPKE</sequence>
<dbReference type="EC" id="4.99.1.9" evidence="1"/>
<dbReference type="EMBL" id="CP000936">
    <property type="protein sequence ID" value="ACA36484.1"/>
    <property type="molecule type" value="Genomic_DNA"/>
</dbReference>
<dbReference type="RefSeq" id="WP_000709253.1">
    <property type="nucleotide sequence ID" value="NC_010380.1"/>
</dbReference>
<dbReference type="SMR" id="B1IBG8"/>
<dbReference type="KEGG" id="spv:SPH_1111"/>
<dbReference type="HOGENOM" id="CLU_018884_2_1_9"/>
<dbReference type="UniPathway" id="UPA00252"/>
<dbReference type="Proteomes" id="UP000002163">
    <property type="component" value="Chromosome"/>
</dbReference>
<dbReference type="GO" id="GO:0005737">
    <property type="term" value="C:cytoplasm"/>
    <property type="evidence" value="ECO:0007669"/>
    <property type="project" value="UniProtKB-SubCell"/>
</dbReference>
<dbReference type="GO" id="GO:0004325">
    <property type="term" value="F:ferrochelatase activity"/>
    <property type="evidence" value="ECO:0007669"/>
    <property type="project" value="UniProtKB-UniRule"/>
</dbReference>
<dbReference type="GO" id="GO:0046872">
    <property type="term" value="F:metal ion binding"/>
    <property type="evidence" value="ECO:0007669"/>
    <property type="project" value="UniProtKB-KW"/>
</dbReference>
<dbReference type="GO" id="GO:0006783">
    <property type="term" value="P:heme biosynthetic process"/>
    <property type="evidence" value="ECO:0007669"/>
    <property type="project" value="UniProtKB-UniRule"/>
</dbReference>
<dbReference type="CDD" id="cd00419">
    <property type="entry name" value="Ferrochelatase_C"/>
    <property type="match status" value="1"/>
</dbReference>
<dbReference type="CDD" id="cd03411">
    <property type="entry name" value="Ferrochelatase_N"/>
    <property type="match status" value="1"/>
</dbReference>
<dbReference type="FunFam" id="3.40.50.1400:FF:000007">
    <property type="entry name" value="Ferrochelatase"/>
    <property type="match status" value="1"/>
</dbReference>
<dbReference type="Gene3D" id="3.40.50.1400">
    <property type="match status" value="2"/>
</dbReference>
<dbReference type="HAMAP" id="MF_00323">
    <property type="entry name" value="Ferrochelatase"/>
    <property type="match status" value="1"/>
</dbReference>
<dbReference type="InterPro" id="IPR001015">
    <property type="entry name" value="Ferrochelatase"/>
</dbReference>
<dbReference type="InterPro" id="IPR019772">
    <property type="entry name" value="Ferrochelatase_AS"/>
</dbReference>
<dbReference type="InterPro" id="IPR033644">
    <property type="entry name" value="Ferrochelatase_C"/>
</dbReference>
<dbReference type="InterPro" id="IPR033659">
    <property type="entry name" value="Ferrochelatase_N"/>
</dbReference>
<dbReference type="NCBIfam" id="TIGR00109">
    <property type="entry name" value="hemH"/>
    <property type="match status" value="1"/>
</dbReference>
<dbReference type="PANTHER" id="PTHR11108">
    <property type="entry name" value="FERROCHELATASE"/>
    <property type="match status" value="1"/>
</dbReference>
<dbReference type="PANTHER" id="PTHR11108:SF1">
    <property type="entry name" value="FERROCHELATASE, MITOCHONDRIAL"/>
    <property type="match status" value="1"/>
</dbReference>
<dbReference type="Pfam" id="PF00762">
    <property type="entry name" value="Ferrochelatase"/>
    <property type="match status" value="1"/>
</dbReference>
<dbReference type="SUPFAM" id="SSF53800">
    <property type="entry name" value="Chelatase"/>
    <property type="match status" value="1"/>
</dbReference>
<dbReference type="PROSITE" id="PS00534">
    <property type="entry name" value="FERROCHELATASE"/>
    <property type="match status" value="1"/>
</dbReference>
<keyword id="KW-0963">Cytoplasm</keyword>
<keyword id="KW-0350">Heme biosynthesis</keyword>
<keyword id="KW-0408">Iron</keyword>
<keyword id="KW-0456">Lyase</keyword>
<keyword id="KW-0479">Metal-binding</keyword>
<keyword id="KW-0627">Porphyrin biosynthesis</keyword>
<proteinExistence type="inferred from homology"/>
<feature type="chain" id="PRO_1000116084" description="Coproporphyrin III ferrochelatase">
    <location>
        <begin position="1"/>
        <end position="364"/>
    </location>
</feature>
<feature type="binding site" evidence="1">
    <location>
        <position position="29"/>
    </location>
    <ligand>
        <name>Fe-coproporphyrin III</name>
        <dbReference type="ChEBI" id="CHEBI:68438"/>
    </ligand>
</feature>
<feature type="binding site" evidence="1">
    <location>
        <position position="118"/>
    </location>
    <ligand>
        <name>Fe-coproporphyrin III</name>
        <dbReference type="ChEBI" id="CHEBI:68438"/>
    </ligand>
</feature>
<feature type="binding site" evidence="1">
    <location>
        <position position="169"/>
    </location>
    <ligand>
        <name>Fe(2+)</name>
        <dbReference type="ChEBI" id="CHEBI:29033"/>
    </ligand>
</feature>
<feature type="binding site" evidence="1">
    <location>
        <position position="250"/>
    </location>
    <ligand>
        <name>Fe(2+)</name>
        <dbReference type="ChEBI" id="CHEBI:29033"/>
    </ligand>
</feature>
<organism>
    <name type="scientific">Streptococcus pneumoniae (strain Hungary19A-6)</name>
    <dbReference type="NCBI Taxonomy" id="487214"/>
    <lineage>
        <taxon>Bacteria</taxon>
        <taxon>Bacillati</taxon>
        <taxon>Bacillota</taxon>
        <taxon>Bacilli</taxon>
        <taxon>Lactobacillales</taxon>
        <taxon>Streptococcaceae</taxon>
        <taxon>Streptococcus</taxon>
    </lineage>
</organism>
<accession>B1IBG8</accession>
<comment type="function">
    <text evidence="1">Involved in coproporphyrin-dependent heme b biosynthesis. Catalyzes the insertion of ferrous iron into coproporphyrin III to form Fe-coproporphyrin III.</text>
</comment>
<comment type="catalytic activity">
    <reaction evidence="1">
        <text>Fe-coproporphyrin III + 2 H(+) = coproporphyrin III + Fe(2+)</text>
        <dbReference type="Rhea" id="RHEA:49572"/>
        <dbReference type="ChEBI" id="CHEBI:15378"/>
        <dbReference type="ChEBI" id="CHEBI:29033"/>
        <dbReference type="ChEBI" id="CHEBI:68438"/>
        <dbReference type="ChEBI" id="CHEBI:131725"/>
        <dbReference type="EC" id="4.99.1.9"/>
    </reaction>
    <physiologicalReaction direction="right-to-left" evidence="1">
        <dbReference type="Rhea" id="RHEA:49574"/>
    </physiologicalReaction>
</comment>
<comment type="pathway">
    <text evidence="1">Porphyrin-containing compound metabolism; protoheme biosynthesis.</text>
</comment>
<comment type="subcellular location">
    <subcellularLocation>
        <location evidence="1">Cytoplasm</location>
    </subcellularLocation>
</comment>
<comment type="similarity">
    <text evidence="1">Belongs to the ferrochelatase family.</text>
</comment>
<protein>
    <recommendedName>
        <fullName evidence="1">Coproporphyrin III ferrochelatase</fullName>
        <ecNumber evidence="1">4.99.1.9</ecNumber>
    </recommendedName>
</protein>
<reference key="1">
    <citation type="journal article" date="2010" name="Genome Biol.">
        <title>Structure and dynamics of the pan-genome of Streptococcus pneumoniae and closely related species.</title>
        <authorList>
            <person name="Donati C."/>
            <person name="Hiller N.L."/>
            <person name="Tettelin H."/>
            <person name="Muzzi A."/>
            <person name="Croucher N.J."/>
            <person name="Angiuoli S.V."/>
            <person name="Oggioni M."/>
            <person name="Dunning Hotopp J.C."/>
            <person name="Hu F.Z."/>
            <person name="Riley D.R."/>
            <person name="Covacci A."/>
            <person name="Mitchell T.J."/>
            <person name="Bentley S.D."/>
            <person name="Kilian M."/>
            <person name="Ehrlich G.D."/>
            <person name="Rappuoli R."/>
            <person name="Moxon E.R."/>
            <person name="Masignani V."/>
        </authorList>
    </citation>
    <scope>NUCLEOTIDE SEQUENCE [LARGE SCALE GENOMIC DNA]</scope>
    <source>
        <strain>Hungary19A-6</strain>
    </source>
</reference>